<gene>
    <name evidence="1" type="primary">hutU</name>
    <name type="ordered locus">HNE_2398</name>
</gene>
<keyword id="KW-0963">Cytoplasm</keyword>
<keyword id="KW-0369">Histidine metabolism</keyword>
<keyword id="KW-0456">Lyase</keyword>
<keyword id="KW-0520">NAD</keyword>
<keyword id="KW-1185">Reference proteome</keyword>
<sequence length="555" mass="60776">MPYPANVREIRAPRGTTLNTQSWLTEAPLRMLMNNLDPDVAERPEDLVVYGGIGRAARNWEAFDAIVAALKRLKEDETLLIQSGKPVGVFRTHADAPRVLLANSNLVPRWANWDHFNELDRKGLMMYGQMTAGSWIYIGAQGIVQGTYETFVEMGRQHHGGNLKGKWLLTAGLGGMGGAQPLASVMAGTACLAIECQPSSIEMRMRTGYLDAWTDDLEKALAMIDESCASGTPKSVGLLGNACEILPKILELGRLPDLLTDQTSAHDPVNGYLPEDWNVEDWKARRLSDPKAVEKAARASMAKHVRAMLEFQRRGVPTVDYGNNIRQVALDEGVADAFDFPGFVPAYIRPLFCRGIGPFRWAALSGDPEDIYRTDQKVKELIPDNPHLHTWLDMARERIKFQGLPARICWVGLGDRHRLGLAFNEMVASGELKAPVVIGRDHLDSGSVASPNRETEAMRDGSDAVSDWPLLNALLNCASGATWVSLHHGGGVGMGYSQHAGMVICCDGTEAAARRIERVLWNDPASGVMRHADAGYDIAIDSAREHGLDLPSLKG</sequence>
<proteinExistence type="inferred from homology"/>
<dbReference type="EC" id="4.2.1.49" evidence="1"/>
<dbReference type="EMBL" id="CP000158">
    <property type="protein sequence ID" value="ABI77376.1"/>
    <property type="molecule type" value="Genomic_DNA"/>
</dbReference>
<dbReference type="RefSeq" id="WP_011647391.1">
    <property type="nucleotide sequence ID" value="NC_008358.1"/>
</dbReference>
<dbReference type="SMR" id="Q0BZK0"/>
<dbReference type="STRING" id="228405.HNE_2398"/>
<dbReference type="KEGG" id="hne:HNE_2398"/>
<dbReference type="eggNOG" id="COG2987">
    <property type="taxonomic scope" value="Bacteria"/>
</dbReference>
<dbReference type="HOGENOM" id="CLU_018868_0_1_5"/>
<dbReference type="UniPathway" id="UPA00379">
    <property type="reaction ID" value="UER00550"/>
</dbReference>
<dbReference type="Proteomes" id="UP000001959">
    <property type="component" value="Chromosome"/>
</dbReference>
<dbReference type="GO" id="GO:0005737">
    <property type="term" value="C:cytoplasm"/>
    <property type="evidence" value="ECO:0007669"/>
    <property type="project" value="UniProtKB-SubCell"/>
</dbReference>
<dbReference type="GO" id="GO:0016153">
    <property type="term" value="F:urocanate hydratase activity"/>
    <property type="evidence" value="ECO:0007669"/>
    <property type="project" value="UniProtKB-UniRule"/>
</dbReference>
<dbReference type="GO" id="GO:0019556">
    <property type="term" value="P:L-histidine catabolic process to glutamate and formamide"/>
    <property type="evidence" value="ECO:0007669"/>
    <property type="project" value="UniProtKB-UniPathway"/>
</dbReference>
<dbReference type="GO" id="GO:0019557">
    <property type="term" value="P:L-histidine catabolic process to glutamate and formate"/>
    <property type="evidence" value="ECO:0007669"/>
    <property type="project" value="UniProtKB-UniPathway"/>
</dbReference>
<dbReference type="FunFam" id="3.40.50.10730:FF:000001">
    <property type="entry name" value="Urocanate hydratase"/>
    <property type="match status" value="1"/>
</dbReference>
<dbReference type="Gene3D" id="3.40.50.10730">
    <property type="entry name" value="Urocanase like domains"/>
    <property type="match status" value="1"/>
</dbReference>
<dbReference type="Gene3D" id="3.40.1770.10">
    <property type="entry name" value="Urocanase superfamily"/>
    <property type="match status" value="1"/>
</dbReference>
<dbReference type="HAMAP" id="MF_00577">
    <property type="entry name" value="HutU"/>
    <property type="match status" value="1"/>
</dbReference>
<dbReference type="InterPro" id="IPR055351">
    <property type="entry name" value="Urocanase"/>
</dbReference>
<dbReference type="InterPro" id="IPR023637">
    <property type="entry name" value="Urocanase-like"/>
</dbReference>
<dbReference type="InterPro" id="IPR035401">
    <property type="entry name" value="Urocanase_C"/>
</dbReference>
<dbReference type="InterPro" id="IPR038364">
    <property type="entry name" value="Urocanase_central_sf"/>
</dbReference>
<dbReference type="InterPro" id="IPR023636">
    <property type="entry name" value="Urocanase_CS"/>
</dbReference>
<dbReference type="InterPro" id="IPR035400">
    <property type="entry name" value="Urocanase_N"/>
</dbReference>
<dbReference type="InterPro" id="IPR035085">
    <property type="entry name" value="Urocanase_Rossmann-like"/>
</dbReference>
<dbReference type="InterPro" id="IPR036190">
    <property type="entry name" value="Urocanase_sf"/>
</dbReference>
<dbReference type="NCBIfam" id="TIGR01228">
    <property type="entry name" value="hutU"/>
    <property type="match status" value="1"/>
</dbReference>
<dbReference type="NCBIfam" id="NF003820">
    <property type="entry name" value="PRK05414.1"/>
    <property type="match status" value="1"/>
</dbReference>
<dbReference type="PANTHER" id="PTHR12216">
    <property type="entry name" value="UROCANATE HYDRATASE"/>
    <property type="match status" value="1"/>
</dbReference>
<dbReference type="PANTHER" id="PTHR12216:SF4">
    <property type="entry name" value="UROCANATE HYDRATASE"/>
    <property type="match status" value="1"/>
</dbReference>
<dbReference type="Pfam" id="PF01175">
    <property type="entry name" value="Urocanase"/>
    <property type="match status" value="1"/>
</dbReference>
<dbReference type="Pfam" id="PF17392">
    <property type="entry name" value="Urocanase_C"/>
    <property type="match status" value="1"/>
</dbReference>
<dbReference type="Pfam" id="PF17391">
    <property type="entry name" value="Urocanase_N"/>
    <property type="match status" value="1"/>
</dbReference>
<dbReference type="PIRSF" id="PIRSF001423">
    <property type="entry name" value="Urocanate_hydrat"/>
    <property type="match status" value="1"/>
</dbReference>
<dbReference type="SUPFAM" id="SSF111326">
    <property type="entry name" value="Urocanase"/>
    <property type="match status" value="1"/>
</dbReference>
<dbReference type="PROSITE" id="PS01233">
    <property type="entry name" value="UROCANASE"/>
    <property type="match status" value="1"/>
</dbReference>
<organism>
    <name type="scientific">Hyphomonas neptunium (strain ATCC 15444)</name>
    <dbReference type="NCBI Taxonomy" id="228405"/>
    <lineage>
        <taxon>Bacteria</taxon>
        <taxon>Pseudomonadati</taxon>
        <taxon>Pseudomonadota</taxon>
        <taxon>Alphaproteobacteria</taxon>
        <taxon>Hyphomonadales</taxon>
        <taxon>Hyphomonadaceae</taxon>
        <taxon>Hyphomonas</taxon>
    </lineage>
</organism>
<name>HUTU_HYPNA</name>
<evidence type="ECO:0000255" key="1">
    <source>
        <dbReference type="HAMAP-Rule" id="MF_00577"/>
    </source>
</evidence>
<comment type="function">
    <text evidence="1">Catalyzes the conversion of urocanate to 4-imidazolone-5-propionate.</text>
</comment>
<comment type="catalytic activity">
    <reaction evidence="1">
        <text>4-imidazolone-5-propanoate = trans-urocanate + H2O</text>
        <dbReference type="Rhea" id="RHEA:13101"/>
        <dbReference type="ChEBI" id="CHEBI:15377"/>
        <dbReference type="ChEBI" id="CHEBI:17771"/>
        <dbReference type="ChEBI" id="CHEBI:77893"/>
        <dbReference type="EC" id="4.2.1.49"/>
    </reaction>
</comment>
<comment type="cofactor">
    <cofactor evidence="1">
        <name>NAD(+)</name>
        <dbReference type="ChEBI" id="CHEBI:57540"/>
    </cofactor>
    <text evidence="1">Binds 1 NAD(+) per subunit.</text>
</comment>
<comment type="pathway">
    <text evidence="1">Amino-acid degradation; L-histidine degradation into L-glutamate; N-formimidoyl-L-glutamate from L-histidine: step 2/3.</text>
</comment>
<comment type="subcellular location">
    <subcellularLocation>
        <location evidence="1">Cytoplasm</location>
    </subcellularLocation>
</comment>
<comment type="similarity">
    <text evidence="1">Belongs to the urocanase family.</text>
</comment>
<protein>
    <recommendedName>
        <fullName evidence="1">Urocanate hydratase</fullName>
        <shortName evidence="1">Urocanase</shortName>
        <ecNumber evidence="1">4.2.1.49</ecNumber>
    </recommendedName>
    <alternativeName>
        <fullName evidence="1">Imidazolonepropionate hydrolase</fullName>
    </alternativeName>
</protein>
<accession>Q0BZK0</accession>
<reference key="1">
    <citation type="journal article" date="2006" name="J. Bacteriol.">
        <title>Comparative genomic evidence for a close relationship between the dimorphic prosthecate bacteria Hyphomonas neptunium and Caulobacter crescentus.</title>
        <authorList>
            <person name="Badger J.H."/>
            <person name="Hoover T.R."/>
            <person name="Brun Y.V."/>
            <person name="Weiner R.M."/>
            <person name="Laub M.T."/>
            <person name="Alexandre G."/>
            <person name="Mrazek J."/>
            <person name="Ren Q."/>
            <person name="Paulsen I.T."/>
            <person name="Nelson K.E."/>
            <person name="Khouri H.M."/>
            <person name="Radune D."/>
            <person name="Sosa J."/>
            <person name="Dodson R.J."/>
            <person name="Sullivan S.A."/>
            <person name="Rosovitz M.J."/>
            <person name="Madupu R."/>
            <person name="Brinkac L.M."/>
            <person name="Durkin A.S."/>
            <person name="Daugherty S.C."/>
            <person name="Kothari S.P."/>
            <person name="Giglio M.G."/>
            <person name="Zhou L."/>
            <person name="Haft D.H."/>
            <person name="Selengut J.D."/>
            <person name="Davidsen T.M."/>
            <person name="Yang Q."/>
            <person name="Zafar N."/>
            <person name="Ward N.L."/>
        </authorList>
    </citation>
    <scope>NUCLEOTIDE SEQUENCE [LARGE SCALE GENOMIC DNA]</scope>
    <source>
        <strain>ATCC 15444</strain>
    </source>
</reference>
<feature type="chain" id="PRO_1000025130" description="Urocanate hydratase">
    <location>
        <begin position="1"/>
        <end position="555"/>
    </location>
</feature>
<feature type="active site" evidence="1">
    <location>
        <position position="409"/>
    </location>
</feature>
<feature type="binding site" evidence="1">
    <location>
        <begin position="51"/>
        <end position="52"/>
    </location>
    <ligand>
        <name>NAD(+)</name>
        <dbReference type="ChEBI" id="CHEBI:57540"/>
    </ligand>
</feature>
<feature type="binding site" evidence="1">
    <location>
        <position position="129"/>
    </location>
    <ligand>
        <name>NAD(+)</name>
        <dbReference type="ChEBI" id="CHEBI:57540"/>
    </ligand>
</feature>
<feature type="binding site" evidence="1">
    <location>
        <begin position="175"/>
        <end position="177"/>
    </location>
    <ligand>
        <name>NAD(+)</name>
        <dbReference type="ChEBI" id="CHEBI:57540"/>
    </ligand>
</feature>
<feature type="binding site" evidence="1">
    <location>
        <position position="195"/>
    </location>
    <ligand>
        <name>NAD(+)</name>
        <dbReference type="ChEBI" id="CHEBI:57540"/>
    </ligand>
</feature>
<feature type="binding site" evidence="1">
    <location>
        <begin position="241"/>
        <end position="242"/>
    </location>
    <ligand>
        <name>NAD(+)</name>
        <dbReference type="ChEBI" id="CHEBI:57540"/>
    </ligand>
</feature>
<feature type="binding site" evidence="1">
    <location>
        <begin position="262"/>
        <end position="266"/>
    </location>
    <ligand>
        <name>NAD(+)</name>
        <dbReference type="ChEBI" id="CHEBI:57540"/>
    </ligand>
</feature>
<feature type="binding site" evidence="1">
    <location>
        <begin position="272"/>
        <end position="273"/>
    </location>
    <ligand>
        <name>NAD(+)</name>
        <dbReference type="ChEBI" id="CHEBI:57540"/>
    </ligand>
</feature>
<feature type="binding site" evidence="1">
    <location>
        <position position="321"/>
    </location>
    <ligand>
        <name>NAD(+)</name>
        <dbReference type="ChEBI" id="CHEBI:57540"/>
    </ligand>
</feature>
<feature type="binding site" evidence="1">
    <location>
        <position position="491"/>
    </location>
    <ligand>
        <name>NAD(+)</name>
        <dbReference type="ChEBI" id="CHEBI:57540"/>
    </ligand>
</feature>